<geneLocation type="plastid"/>
<keyword id="KW-0007">Acetylation</keyword>
<keyword id="KW-0113">Calvin cycle</keyword>
<keyword id="KW-0120">Carbon dioxide fixation</keyword>
<keyword id="KW-1015">Disulfide bond</keyword>
<keyword id="KW-0456">Lyase</keyword>
<keyword id="KW-0460">Magnesium</keyword>
<keyword id="KW-0479">Metal-binding</keyword>
<keyword id="KW-0488">Methylation</keyword>
<keyword id="KW-0503">Monooxygenase</keyword>
<keyword id="KW-0560">Oxidoreductase</keyword>
<keyword id="KW-0601">Photorespiration</keyword>
<keyword id="KW-0934">Plastid</keyword>
<comment type="function">
    <text evidence="1">RuBisCO catalyzes two reactions: the carboxylation of D-ribulose 1,5-bisphosphate, the primary event in carbon dioxide fixation, as well as the oxidative fragmentation of the pentose substrate in the photorespiration process. Both reactions occur simultaneously and in competition at the same active site (By similarity).</text>
</comment>
<comment type="catalytic activity">
    <reaction>
        <text>2 (2R)-3-phosphoglycerate + 2 H(+) = D-ribulose 1,5-bisphosphate + CO2 + H2O</text>
        <dbReference type="Rhea" id="RHEA:23124"/>
        <dbReference type="ChEBI" id="CHEBI:15377"/>
        <dbReference type="ChEBI" id="CHEBI:15378"/>
        <dbReference type="ChEBI" id="CHEBI:16526"/>
        <dbReference type="ChEBI" id="CHEBI:57870"/>
        <dbReference type="ChEBI" id="CHEBI:58272"/>
        <dbReference type="EC" id="4.1.1.39"/>
    </reaction>
</comment>
<comment type="catalytic activity">
    <reaction>
        <text>D-ribulose 1,5-bisphosphate + O2 = 2-phosphoglycolate + (2R)-3-phosphoglycerate + 2 H(+)</text>
        <dbReference type="Rhea" id="RHEA:36631"/>
        <dbReference type="ChEBI" id="CHEBI:15378"/>
        <dbReference type="ChEBI" id="CHEBI:15379"/>
        <dbReference type="ChEBI" id="CHEBI:57870"/>
        <dbReference type="ChEBI" id="CHEBI:58033"/>
        <dbReference type="ChEBI" id="CHEBI:58272"/>
    </reaction>
</comment>
<comment type="cofactor">
    <cofactor evidence="1">
        <name>Mg(2+)</name>
        <dbReference type="ChEBI" id="CHEBI:18420"/>
    </cofactor>
    <text evidence="1">Binds 1 Mg(2+) ion per subunit.</text>
</comment>
<comment type="subunit">
    <text evidence="1">Heterohexadecamer of 8 large chains and 8 small chains; disulfide-linked. The disulfide link is formed within the large subunit homodimers (By similarity).</text>
</comment>
<comment type="subcellular location">
    <subcellularLocation>
        <location>Plastid</location>
    </subcellularLocation>
</comment>
<comment type="PTM">
    <text evidence="1">The disulfide bond which can form in the large chain dimeric partners within the hexadecamer appears to be associated with oxidative stress and protein turnover.</text>
</comment>
<comment type="miscellaneous">
    <text evidence="1">The basic functional RuBisCO is composed of a large chain homodimer in a 'head-to-tail' conformation. In form I RuBisCO this homodimer is arranged in a barrel-like tetramer with the small subunits forming a tetrameric 'cap' on each end of the 'barrel' (By similarity).</text>
</comment>
<comment type="similarity">
    <text evidence="3">Belongs to the RuBisCO large chain family. Type I subfamily.</text>
</comment>
<comment type="caution">
    <text evidence="3">Young tissue from this organism is photosynthetic and contains some thylakoids, although the photosynthetic activity does not exceed the light compensation point.</text>
</comment>
<protein>
    <recommendedName>
        <fullName>Ribulose bisphosphate carboxylase large chain</fullName>
        <shortName>RuBisCO large subunit</shortName>
        <ecNumber>4.1.1.39</ecNumber>
    </recommendedName>
</protein>
<dbReference type="EC" id="4.1.1.39"/>
<dbReference type="EMBL" id="X61698">
    <property type="protein sequence ID" value="CAA43867.1"/>
    <property type="molecule type" value="Genomic_DNA"/>
</dbReference>
<dbReference type="EMBL" id="AM711640">
    <property type="protein sequence ID" value="CAM98406.1"/>
    <property type="molecule type" value="Genomic_DNA"/>
</dbReference>
<dbReference type="PIR" id="S20477">
    <property type="entry name" value="S20477"/>
</dbReference>
<dbReference type="RefSeq" id="YP_001430120.1">
    <property type="nucleotide sequence ID" value="NC_009766.1"/>
</dbReference>
<dbReference type="SMR" id="P30401"/>
<dbReference type="GeneID" id="5536649"/>
<dbReference type="GO" id="GO:0009536">
    <property type="term" value="C:plastid"/>
    <property type="evidence" value="ECO:0007669"/>
    <property type="project" value="UniProtKB-SubCell"/>
</dbReference>
<dbReference type="GO" id="GO:0000287">
    <property type="term" value="F:magnesium ion binding"/>
    <property type="evidence" value="ECO:0007669"/>
    <property type="project" value="UniProtKB-UniRule"/>
</dbReference>
<dbReference type="GO" id="GO:0004497">
    <property type="term" value="F:monooxygenase activity"/>
    <property type="evidence" value="ECO:0007669"/>
    <property type="project" value="UniProtKB-KW"/>
</dbReference>
<dbReference type="GO" id="GO:0016984">
    <property type="term" value="F:ribulose-bisphosphate carboxylase activity"/>
    <property type="evidence" value="ECO:0007669"/>
    <property type="project" value="UniProtKB-UniRule"/>
</dbReference>
<dbReference type="GO" id="GO:0009853">
    <property type="term" value="P:photorespiration"/>
    <property type="evidence" value="ECO:0007669"/>
    <property type="project" value="UniProtKB-KW"/>
</dbReference>
<dbReference type="GO" id="GO:0019253">
    <property type="term" value="P:reductive pentose-phosphate cycle"/>
    <property type="evidence" value="ECO:0007669"/>
    <property type="project" value="UniProtKB-UniRule"/>
</dbReference>
<dbReference type="CDD" id="cd08212">
    <property type="entry name" value="RuBisCO_large_I"/>
    <property type="match status" value="1"/>
</dbReference>
<dbReference type="FunFam" id="3.20.20.110:FF:000001">
    <property type="entry name" value="Ribulose bisphosphate carboxylase large chain"/>
    <property type="match status" value="1"/>
</dbReference>
<dbReference type="FunFam" id="3.30.70.150:FF:000001">
    <property type="entry name" value="Ribulose bisphosphate carboxylase large chain"/>
    <property type="match status" value="1"/>
</dbReference>
<dbReference type="Gene3D" id="3.20.20.110">
    <property type="entry name" value="Ribulose bisphosphate carboxylase, large subunit, C-terminal domain"/>
    <property type="match status" value="1"/>
</dbReference>
<dbReference type="Gene3D" id="3.30.70.150">
    <property type="entry name" value="RuBisCO large subunit, N-terminal domain"/>
    <property type="match status" value="1"/>
</dbReference>
<dbReference type="HAMAP" id="MF_01338">
    <property type="entry name" value="RuBisCO_L_type1"/>
    <property type="match status" value="1"/>
</dbReference>
<dbReference type="InterPro" id="IPR033966">
    <property type="entry name" value="RuBisCO"/>
</dbReference>
<dbReference type="InterPro" id="IPR020878">
    <property type="entry name" value="RuBisCo_large_chain_AS"/>
</dbReference>
<dbReference type="InterPro" id="IPR000685">
    <property type="entry name" value="RuBisCO_lsu_C"/>
</dbReference>
<dbReference type="InterPro" id="IPR036376">
    <property type="entry name" value="RuBisCO_lsu_C_sf"/>
</dbReference>
<dbReference type="InterPro" id="IPR017443">
    <property type="entry name" value="RuBisCO_lsu_fd_N"/>
</dbReference>
<dbReference type="InterPro" id="IPR036422">
    <property type="entry name" value="RuBisCO_lsu_N_sf"/>
</dbReference>
<dbReference type="InterPro" id="IPR020888">
    <property type="entry name" value="RuBisCO_lsuI"/>
</dbReference>
<dbReference type="NCBIfam" id="NF003252">
    <property type="entry name" value="PRK04208.1"/>
    <property type="match status" value="1"/>
</dbReference>
<dbReference type="PANTHER" id="PTHR42704">
    <property type="entry name" value="RIBULOSE BISPHOSPHATE CARBOXYLASE"/>
    <property type="match status" value="1"/>
</dbReference>
<dbReference type="PANTHER" id="PTHR42704:SF16">
    <property type="entry name" value="RIBULOSE BISPHOSPHATE CARBOXYLASE LARGE CHAIN"/>
    <property type="match status" value="1"/>
</dbReference>
<dbReference type="Pfam" id="PF00016">
    <property type="entry name" value="RuBisCO_large"/>
    <property type="match status" value="1"/>
</dbReference>
<dbReference type="Pfam" id="PF02788">
    <property type="entry name" value="RuBisCO_large_N"/>
    <property type="match status" value="1"/>
</dbReference>
<dbReference type="SFLD" id="SFLDG01052">
    <property type="entry name" value="RuBisCO"/>
    <property type="match status" value="1"/>
</dbReference>
<dbReference type="SFLD" id="SFLDS00014">
    <property type="entry name" value="RuBisCO"/>
    <property type="match status" value="1"/>
</dbReference>
<dbReference type="SFLD" id="SFLDG00301">
    <property type="entry name" value="RuBisCO-like_proteins"/>
    <property type="match status" value="1"/>
</dbReference>
<dbReference type="SUPFAM" id="SSF51649">
    <property type="entry name" value="RuBisCo, C-terminal domain"/>
    <property type="match status" value="1"/>
</dbReference>
<dbReference type="SUPFAM" id="SSF54966">
    <property type="entry name" value="RuBisCO, large subunit, small (N-terminal) domain"/>
    <property type="match status" value="1"/>
</dbReference>
<dbReference type="PROSITE" id="PS00157">
    <property type="entry name" value="RUBISCO_LARGE"/>
    <property type="match status" value="1"/>
</dbReference>
<gene>
    <name type="primary">rbcL</name>
</gene>
<evidence type="ECO:0000250" key="1"/>
<evidence type="ECO:0000256" key="2">
    <source>
        <dbReference type="SAM" id="MobiDB-lite"/>
    </source>
</evidence>
<evidence type="ECO:0000305" key="3"/>
<proteinExistence type="inferred from homology"/>
<sequence>MSPQTETKASVGFKAGVKDYKLTYYTPDYETKDTDILAAFRVTPQPGVPPEEAGAAVAAESSTGTWTTVWTDGLTSLDRYKGRCYRIERVIGEKDQYIAYVAYPLDLFEEGSVTNLFTSIVGNVFGFKALRALRLEDLRIPPAYTKTFQGPPHGIQVERDKLNKYGRPLLGCTIKPKLGLSAKNYGRAVYECLRGGLDFTKDDENVNSQPFMRWRDRFLFCAEAIYKSQAETGEIKGHYLNATAGTCEEMLKRALFARELGVPIIMHDYLTGGFTANTSLAHYCRENGLLLHIHRAMHAVIDRQKNHGIHFRVLAKALRLSGGDHIHSGTVVGKLEGEREITLGFVDLLRDDFVEQDRSRGIYFPQDWVSLPGVMPVASGGIHVWHMPALTEIFGDDSVLQFGGGTLGHPWGNAPGAVANRVALEACVQARNEGRDLAQEGNDILRQAGKWSPELAAACEVWKEIRFDFKPVDTLDPNDKKQRDNEDTLADKLFGDKG</sequence>
<feature type="propeptide" id="PRO_0000031197" evidence="1">
    <location>
        <begin position="1"/>
        <end position="2"/>
    </location>
</feature>
<feature type="chain" id="PRO_0000031198" description="Ribulose bisphosphate carboxylase large chain">
    <location>
        <begin position="3"/>
        <end position="498"/>
    </location>
</feature>
<feature type="region of interest" description="Disordered" evidence="2">
    <location>
        <begin position="471"/>
        <end position="498"/>
    </location>
</feature>
<feature type="active site" description="Proton acceptor" evidence="1">
    <location>
        <position position="175"/>
    </location>
</feature>
<feature type="active site" description="Proton acceptor" evidence="1">
    <location>
        <position position="294"/>
    </location>
</feature>
<feature type="binding site" description="in homodimeric partner" evidence="1">
    <location>
        <position position="123"/>
    </location>
    <ligand>
        <name>substrate</name>
    </ligand>
</feature>
<feature type="binding site" evidence="1">
    <location>
        <position position="173"/>
    </location>
    <ligand>
        <name>substrate</name>
    </ligand>
</feature>
<feature type="binding site" evidence="1">
    <location>
        <position position="177"/>
    </location>
    <ligand>
        <name>substrate</name>
    </ligand>
</feature>
<feature type="binding site" description="via carbamate group" evidence="1">
    <location>
        <position position="201"/>
    </location>
    <ligand>
        <name>Mg(2+)</name>
        <dbReference type="ChEBI" id="CHEBI:18420"/>
    </ligand>
</feature>
<feature type="binding site" evidence="1">
    <location>
        <position position="203"/>
    </location>
    <ligand>
        <name>Mg(2+)</name>
        <dbReference type="ChEBI" id="CHEBI:18420"/>
    </ligand>
</feature>
<feature type="binding site" evidence="1">
    <location>
        <position position="204"/>
    </location>
    <ligand>
        <name>Mg(2+)</name>
        <dbReference type="ChEBI" id="CHEBI:18420"/>
    </ligand>
</feature>
<feature type="binding site" evidence="1">
    <location>
        <position position="295"/>
    </location>
    <ligand>
        <name>substrate</name>
    </ligand>
</feature>
<feature type="binding site" evidence="1">
    <location>
        <position position="327"/>
    </location>
    <ligand>
        <name>substrate</name>
    </ligand>
</feature>
<feature type="binding site" evidence="1">
    <location>
        <position position="379"/>
    </location>
    <ligand>
        <name>substrate</name>
    </ligand>
</feature>
<feature type="site" description="Transition state stabilizer" evidence="1">
    <location>
        <position position="334"/>
    </location>
</feature>
<feature type="modified residue" description="N-acetylproline" evidence="1">
    <location>
        <position position="3"/>
    </location>
</feature>
<feature type="modified residue" description="N6,N6,N6-trimethyllysine" evidence="1">
    <location>
        <position position="14"/>
    </location>
</feature>
<feature type="modified residue" description="N6-carboxylysine" evidence="1">
    <location>
        <position position="201"/>
    </location>
</feature>
<feature type="disulfide bond" description="Interchain; in linked form" evidence="1">
    <location>
        <position position="247"/>
    </location>
</feature>
<name>RBL_CUSRE</name>
<organism>
    <name type="scientific">Cuscuta reflexa</name>
    <name type="common">Southern Asian dodder</name>
    <dbReference type="NCBI Taxonomy" id="4129"/>
    <lineage>
        <taxon>Eukaryota</taxon>
        <taxon>Viridiplantae</taxon>
        <taxon>Streptophyta</taxon>
        <taxon>Embryophyta</taxon>
        <taxon>Tracheophyta</taxon>
        <taxon>Spermatophyta</taxon>
        <taxon>Magnoliopsida</taxon>
        <taxon>eudicotyledons</taxon>
        <taxon>Gunneridae</taxon>
        <taxon>Pentapetalae</taxon>
        <taxon>asterids</taxon>
        <taxon>lamiids</taxon>
        <taxon>Solanales</taxon>
        <taxon>Convolvulaceae</taxon>
        <taxon>Cuscuteae</taxon>
        <taxon>Cuscuta</taxon>
        <taxon>Cuscuta subgen. Monogynella</taxon>
    </lineage>
</organism>
<accession>P30401</accession>
<accession>A7M978</accession>
<reference key="1">
    <citation type="journal article" date="1992" name="Mol. Gen. Genet.">
        <title>Organization and sequence of photosynthetic genes from the plastid genome of the holoparasitic flowering plant Cuscuta reflexa.</title>
        <authorList>
            <person name="Haberhausen G."/>
            <person name="Valentin K.-U."/>
            <person name="Zetsche K."/>
        </authorList>
    </citation>
    <scope>NUCLEOTIDE SEQUENCE [GENOMIC DNA]</scope>
    <source>
        <strain>ROXB</strain>
    </source>
</reference>
<reference key="2">
    <citation type="journal article" date="2007" name="BMC Plant Biol.">
        <title>Complete DNA sequences of the plastid genomes of two parasitic flowering plant species, Cuscuta reflexa and Cuscuta gronovii.</title>
        <authorList>
            <person name="Funk H.T."/>
            <person name="Berg S."/>
            <person name="Krupinska K."/>
            <person name="Maier U.-G."/>
            <person name="Krause K."/>
        </authorList>
    </citation>
    <scope>NUCLEOTIDE SEQUENCE [LARGE SCALE GENOMIC DNA]</scope>
</reference>